<gene>
    <name evidence="1" type="primary">nikE</name>
    <name type="synonym">oppF2</name>
    <name type="ordered locus">SAR1392</name>
</gene>
<dbReference type="EC" id="7.2.2.11" evidence="1"/>
<dbReference type="EMBL" id="BX571856">
    <property type="protein sequence ID" value="CAG40389.1"/>
    <property type="molecule type" value="Genomic_DNA"/>
</dbReference>
<dbReference type="RefSeq" id="WP_000571253.1">
    <property type="nucleotide sequence ID" value="NC_002952.2"/>
</dbReference>
<dbReference type="SMR" id="Q6GH28"/>
<dbReference type="KEGG" id="sar:SAR1392"/>
<dbReference type="HOGENOM" id="CLU_000604_1_23_9"/>
<dbReference type="Proteomes" id="UP000000596">
    <property type="component" value="Chromosome"/>
</dbReference>
<dbReference type="GO" id="GO:0005886">
    <property type="term" value="C:plasma membrane"/>
    <property type="evidence" value="ECO:0007669"/>
    <property type="project" value="UniProtKB-SubCell"/>
</dbReference>
<dbReference type="GO" id="GO:0015413">
    <property type="term" value="F:ABC-type nickel transporter activity"/>
    <property type="evidence" value="ECO:0007669"/>
    <property type="project" value="UniProtKB-EC"/>
</dbReference>
<dbReference type="GO" id="GO:0005524">
    <property type="term" value="F:ATP binding"/>
    <property type="evidence" value="ECO:0007669"/>
    <property type="project" value="UniProtKB-KW"/>
</dbReference>
<dbReference type="GO" id="GO:0016887">
    <property type="term" value="F:ATP hydrolysis activity"/>
    <property type="evidence" value="ECO:0007669"/>
    <property type="project" value="InterPro"/>
</dbReference>
<dbReference type="CDD" id="cd03257">
    <property type="entry name" value="ABC_NikE_OppD_transporters"/>
    <property type="match status" value="1"/>
</dbReference>
<dbReference type="FunFam" id="3.40.50.300:FF:001829">
    <property type="entry name" value="Nickel import system ATP-binding protein NikE"/>
    <property type="match status" value="1"/>
</dbReference>
<dbReference type="Gene3D" id="3.40.50.300">
    <property type="entry name" value="P-loop containing nucleotide triphosphate hydrolases"/>
    <property type="match status" value="1"/>
</dbReference>
<dbReference type="InterPro" id="IPR003593">
    <property type="entry name" value="AAA+_ATPase"/>
</dbReference>
<dbReference type="InterPro" id="IPR050319">
    <property type="entry name" value="ABC_transp_ATP-bind"/>
</dbReference>
<dbReference type="InterPro" id="IPR003439">
    <property type="entry name" value="ABC_transporter-like_ATP-bd"/>
</dbReference>
<dbReference type="InterPro" id="IPR027417">
    <property type="entry name" value="P-loop_NTPase"/>
</dbReference>
<dbReference type="PANTHER" id="PTHR43776">
    <property type="entry name" value="TRANSPORT ATP-BINDING PROTEIN"/>
    <property type="match status" value="1"/>
</dbReference>
<dbReference type="Pfam" id="PF00005">
    <property type="entry name" value="ABC_tran"/>
    <property type="match status" value="1"/>
</dbReference>
<dbReference type="SMART" id="SM00382">
    <property type="entry name" value="AAA"/>
    <property type="match status" value="1"/>
</dbReference>
<dbReference type="SUPFAM" id="SSF52540">
    <property type="entry name" value="P-loop containing nucleoside triphosphate hydrolases"/>
    <property type="match status" value="1"/>
</dbReference>
<dbReference type="PROSITE" id="PS50893">
    <property type="entry name" value="ABC_TRANSPORTER_2"/>
    <property type="match status" value="1"/>
</dbReference>
<keyword id="KW-0067">ATP-binding</keyword>
<keyword id="KW-1003">Cell membrane</keyword>
<keyword id="KW-0406">Ion transport</keyword>
<keyword id="KW-0472">Membrane</keyword>
<keyword id="KW-0533">Nickel</keyword>
<keyword id="KW-0921">Nickel transport</keyword>
<keyword id="KW-0547">Nucleotide-binding</keyword>
<keyword id="KW-1278">Translocase</keyword>
<keyword id="KW-0813">Transport</keyword>
<feature type="chain" id="PRO_0000276803" description="Nickel import system ATP-binding protein NikE">
    <location>
        <begin position="1"/>
        <end position="233"/>
    </location>
</feature>
<feature type="domain" description="ABC transporter" evidence="2">
    <location>
        <begin position="2"/>
        <end position="228"/>
    </location>
</feature>
<feature type="binding site" evidence="2">
    <location>
        <begin position="35"/>
        <end position="42"/>
    </location>
    <ligand>
        <name>ATP</name>
        <dbReference type="ChEBI" id="CHEBI:30616"/>
    </ligand>
</feature>
<accession>Q6GH28</accession>
<comment type="function">
    <text evidence="1">Part of the ABC transporter complex NikABCDE (Opp2) involved in nickel import. Probably responsible for energy coupling to the transport system.</text>
</comment>
<comment type="catalytic activity">
    <reaction evidence="1">
        <text>Ni(2+)(out) + ATP + H2O = Ni(2+)(in) + ADP + phosphate + H(+)</text>
        <dbReference type="Rhea" id="RHEA:15557"/>
        <dbReference type="ChEBI" id="CHEBI:15377"/>
        <dbReference type="ChEBI" id="CHEBI:15378"/>
        <dbReference type="ChEBI" id="CHEBI:30616"/>
        <dbReference type="ChEBI" id="CHEBI:43474"/>
        <dbReference type="ChEBI" id="CHEBI:49786"/>
        <dbReference type="ChEBI" id="CHEBI:456216"/>
        <dbReference type="EC" id="7.2.2.11"/>
    </reaction>
    <physiologicalReaction direction="left-to-right" evidence="1">
        <dbReference type="Rhea" id="RHEA:15558"/>
    </physiologicalReaction>
</comment>
<comment type="subunit">
    <text evidence="1">The complex is composed of two ATP-binding proteins (NikD and NikE), two transmembrane proteins (NikB and NikC) and a solute-binding protein (NikA).</text>
</comment>
<comment type="subcellular location">
    <subcellularLocation>
        <location evidence="3">Cell membrane</location>
        <topology evidence="3">Peripheral membrane protein</topology>
    </subcellularLocation>
</comment>
<comment type="similarity">
    <text evidence="3">Belongs to the ABC transporter superfamily.</text>
</comment>
<protein>
    <recommendedName>
        <fullName evidence="1">Nickel import system ATP-binding protein NikE</fullName>
        <ecNumber evidence="1">7.2.2.11</ecNumber>
    </recommendedName>
</protein>
<organism>
    <name type="scientific">Staphylococcus aureus (strain MRSA252)</name>
    <dbReference type="NCBI Taxonomy" id="282458"/>
    <lineage>
        <taxon>Bacteria</taxon>
        <taxon>Bacillati</taxon>
        <taxon>Bacillota</taxon>
        <taxon>Bacilli</taxon>
        <taxon>Bacillales</taxon>
        <taxon>Staphylococcaceae</taxon>
        <taxon>Staphylococcus</taxon>
    </lineage>
</organism>
<proteinExistence type="inferred from homology"/>
<evidence type="ECO:0000250" key="1">
    <source>
        <dbReference type="UniProtKB" id="Q2FYQ8"/>
    </source>
</evidence>
<evidence type="ECO:0000255" key="2">
    <source>
        <dbReference type="PROSITE-ProRule" id="PRU00434"/>
    </source>
</evidence>
<evidence type="ECO:0000305" key="3"/>
<reference key="1">
    <citation type="journal article" date="2004" name="Proc. Natl. Acad. Sci. U.S.A.">
        <title>Complete genomes of two clinical Staphylococcus aureus strains: evidence for the rapid evolution of virulence and drug resistance.</title>
        <authorList>
            <person name="Holden M.T.G."/>
            <person name="Feil E.J."/>
            <person name="Lindsay J.A."/>
            <person name="Peacock S.J."/>
            <person name="Day N.P.J."/>
            <person name="Enright M.C."/>
            <person name="Foster T.J."/>
            <person name="Moore C.E."/>
            <person name="Hurst L."/>
            <person name="Atkin R."/>
            <person name="Barron A."/>
            <person name="Bason N."/>
            <person name="Bentley S.D."/>
            <person name="Chillingworth C."/>
            <person name="Chillingworth T."/>
            <person name="Churcher C."/>
            <person name="Clark L."/>
            <person name="Corton C."/>
            <person name="Cronin A."/>
            <person name="Doggett J."/>
            <person name="Dowd L."/>
            <person name="Feltwell T."/>
            <person name="Hance Z."/>
            <person name="Harris B."/>
            <person name="Hauser H."/>
            <person name="Holroyd S."/>
            <person name="Jagels K."/>
            <person name="James K.D."/>
            <person name="Lennard N."/>
            <person name="Line A."/>
            <person name="Mayes R."/>
            <person name="Moule S."/>
            <person name="Mungall K."/>
            <person name="Ormond D."/>
            <person name="Quail M.A."/>
            <person name="Rabbinowitsch E."/>
            <person name="Rutherford K.M."/>
            <person name="Sanders M."/>
            <person name="Sharp S."/>
            <person name="Simmonds M."/>
            <person name="Stevens K."/>
            <person name="Whitehead S."/>
            <person name="Barrell B.G."/>
            <person name="Spratt B.G."/>
            <person name="Parkhill J."/>
        </authorList>
    </citation>
    <scope>NUCLEOTIDE SEQUENCE [LARGE SCALE GENOMIC DNA]</scope>
    <source>
        <strain>MRSA252</strain>
    </source>
</reference>
<sequence length="233" mass="26287">MIELKHVTFGYNKKQMVLQDINITIPDGENVGILGESGCGKSTLASLVLGLFKPVKGEIYLSDNAVLPIFQHPLTSFNPDWTIETSLKEALYYYRGLTDNTAQDQLLIQHLSTFELNAQLLTKLPSEVSGGQLQRFNVMRSLLAQPRVLICDEITSNLDVIAEQNVINILKAQTITNLNHFIVISHDLSVLQRLVNRIIVLKDGMIVDDFTIEELFNVDRHPYTKELVQAFSY</sequence>
<name>NIKE_STAAR</name>